<proteinExistence type="uncertain"/>
<evidence type="ECO:0000250" key="1"/>
<evidence type="ECO:0000305" key="2"/>
<protein>
    <recommendedName>
        <fullName>Putative acyl carrier protein phosphodiesterase</fullName>
        <shortName>ACP phosphodiesterase</shortName>
        <ecNumber>3.1.4.14</ecNumber>
    </recommendedName>
</protein>
<name>ACPH_SHIDS</name>
<feature type="chain" id="PRO_0000226275" description="Putative acyl carrier protein phosphodiesterase">
    <location>
        <begin position="1"/>
        <end position="143"/>
    </location>
</feature>
<sequence>MTDNLPEVREAREWFRSETRRVAPITLDVMWDHFLSRHWSQLSPDFPLQEFVCYAREQVMTILPDSLPRFINLNNYLWSEQWLVRYRDMDFIQNVLNGMASRRPRLDALRDSWYDLNAHYAALETRFWQFYPRMMAQVSRKAL</sequence>
<reference key="1">
    <citation type="journal article" date="2005" name="Nucleic Acids Res.">
        <title>Genome dynamics and diversity of Shigella species, the etiologic agents of bacillary dysentery.</title>
        <authorList>
            <person name="Yang F."/>
            <person name="Yang J."/>
            <person name="Zhang X."/>
            <person name="Chen L."/>
            <person name="Jiang Y."/>
            <person name="Yan Y."/>
            <person name="Tang X."/>
            <person name="Wang J."/>
            <person name="Xiong Z."/>
            <person name="Dong J."/>
            <person name="Xue Y."/>
            <person name="Zhu Y."/>
            <person name="Xu X."/>
            <person name="Sun L."/>
            <person name="Chen S."/>
            <person name="Nie H."/>
            <person name="Peng J."/>
            <person name="Xu J."/>
            <person name="Wang Y."/>
            <person name="Yuan Z."/>
            <person name="Wen Y."/>
            <person name="Yao Z."/>
            <person name="Shen Y."/>
            <person name="Qiang B."/>
            <person name="Hou Y."/>
            <person name="Yu J."/>
            <person name="Jin Q."/>
        </authorList>
    </citation>
    <scope>NUCLEOTIDE SEQUENCE [LARGE SCALE GENOMIC DNA]</scope>
    <source>
        <strain>Sd197</strain>
    </source>
</reference>
<keyword id="KW-0275">Fatty acid biosynthesis</keyword>
<keyword id="KW-0276">Fatty acid metabolism</keyword>
<keyword id="KW-0378">Hydrolase</keyword>
<keyword id="KW-0444">Lipid biosynthesis</keyword>
<keyword id="KW-0443">Lipid metabolism</keyword>
<keyword id="KW-1185">Reference proteome</keyword>
<gene>
    <name type="primary">acpH</name>
    <name type="ordered locus">SDY_0330</name>
</gene>
<comment type="function">
    <text evidence="1">Converts holo-ACP to apo-ACP by hydrolytic cleavage of the phosphopantetheine prosthetic group from ACP.</text>
</comment>
<comment type="catalytic activity">
    <reaction>
        <text>holo-[ACP] + H2O = apo-[ACP] + (R)-4'-phosphopantetheine + H(+)</text>
        <dbReference type="Rhea" id="RHEA:20537"/>
        <dbReference type="Rhea" id="RHEA-COMP:9685"/>
        <dbReference type="Rhea" id="RHEA-COMP:9690"/>
        <dbReference type="ChEBI" id="CHEBI:15377"/>
        <dbReference type="ChEBI" id="CHEBI:15378"/>
        <dbReference type="ChEBI" id="CHEBI:29999"/>
        <dbReference type="ChEBI" id="CHEBI:61723"/>
        <dbReference type="ChEBI" id="CHEBI:64479"/>
        <dbReference type="EC" id="3.1.4.14"/>
    </reaction>
</comment>
<comment type="similarity">
    <text evidence="2">Belongs to the AcpH family.</text>
</comment>
<comment type="caution">
    <text evidence="2">Could be the product of a pseudogene. The N-terminus is shorter than in related proteins.</text>
</comment>
<organism>
    <name type="scientific">Shigella dysenteriae serotype 1 (strain Sd197)</name>
    <dbReference type="NCBI Taxonomy" id="300267"/>
    <lineage>
        <taxon>Bacteria</taxon>
        <taxon>Pseudomonadati</taxon>
        <taxon>Pseudomonadota</taxon>
        <taxon>Gammaproteobacteria</taxon>
        <taxon>Enterobacterales</taxon>
        <taxon>Enterobacteriaceae</taxon>
        <taxon>Shigella</taxon>
    </lineage>
</organism>
<dbReference type="EC" id="3.1.4.14"/>
<dbReference type="EMBL" id="CP000034">
    <property type="protein sequence ID" value="ABB60549.1"/>
    <property type="molecule type" value="Genomic_DNA"/>
</dbReference>
<dbReference type="SMR" id="Q32JF8"/>
<dbReference type="STRING" id="300267.SDY_0330"/>
<dbReference type="EnsemblBacteria" id="ABB60549">
    <property type="protein sequence ID" value="ABB60549"/>
    <property type="gene ID" value="SDY_0330"/>
</dbReference>
<dbReference type="KEGG" id="sdy:SDY_0330"/>
<dbReference type="HOGENOM" id="CLU_099370_1_0_6"/>
<dbReference type="Proteomes" id="UP000002716">
    <property type="component" value="Chromosome"/>
</dbReference>
<dbReference type="GO" id="GO:0008770">
    <property type="term" value="F:[acyl-carrier-protein] phosphodiesterase activity"/>
    <property type="evidence" value="ECO:0007669"/>
    <property type="project" value="UniProtKB-EC"/>
</dbReference>
<dbReference type="GO" id="GO:0006633">
    <property type="term" value="P:fatty acid biosynthetic process"/>
    <property type="evidence" value="ECO:0007669"/>
    <property type="project" value="UniProtKB-KW"/>
</dbReference>
<dbReference type="InterPro" id="IPR007431">
    <property type="entry name" value="ACP_PD"/>
</dbReference>
<dbReference type="PANTHER" id="PTHR38764">
    <property type="entry name" value="ACYL CARRIER PROTEIN PHOSPHODIESTERASE"/>
    <property type="match status" value="1"/>
</dbReference>
<dbReference type="PANTHER" id="PTHR38764:SF1">
    <property type="entry name" value="ACYL CARRIER PROTEIN PHOSPHODIESTERASE"/>
    <property type="match status" value="1"/>
</dbReference>
<dbReference type="Pfam" id="PF04336">
    <property type="entry name" value="ACP_PD"/>
    <property type="match status" value="1"/>
</dbReference>
<accession>Q32JF8</accession>